<organism>
    <name type="scientific">Shewanella amazonensis (strain ATCC BAA-1098 / SB2B)</name>
    <dbReference type="NCBI Taxonomy" id="326297"/>
    <lineage>
        <taxon>Bacteria</taxon>
        <taxon>Pseudomonadati</taxon>
        <taxon>Pseudomonadota</taxon>
        <taxon>Gammaproteobacteria</taxon>
        <taxon>Alteromonadales</taxon>
        <taxon>Shewanellaceae</taxon>
        <taxon>Shewanella</taxon>
    </lineage>
</organism>
<sequence length="216" mass="24033">MQAKTLHIRHLGNQDYETVWHAMQHYTDNRDENSPDELWLVEHPPVFTQGQAGKAEHILNPGDIPVIQVDRGGQVTYHGPGQLVAYPLLDIKRLKIGVRQLVTHIEQSIVDMLKPYGVQAYAKADAPGVYVDERKVASLGLRIRRGCSFHGLALNVDMDISPFQRINPCGYAGLEMVQCKALGGPNTVNEAGEKLTLTFSQLLGYEHLVHHQGLAE</sequence>
<accession>A1S8U0</accession>
<gene>
    <name evidence="1" type="primary">lipB</name>
    <name type="ordered locus">Sama_2594</name>
</gene>
<dbReference type="EC" id="2.3.1.181" evidence="1"/>
<dbReference type="EMBL" id="CP000507">
    <property type="protein sequence ID" value="ABM00797.1"/>
    <property type="molecule type" value="Genomic_DNA"/>
</dbReference>
<dbReference type="RefSeq" id="WP_011760703.1">
    <property type="nucleotide sequence ID" value="NC_008700.1"/>
</dbReference>
<dbReference type="SMR" id="A1S8U0"/>
<dbReference type="STRING" id="326297.Sama_2594"/>
<dbReference type="KEGG" id="saz:Sama_2594"/>
<dbReference type="eggNOG" id="COG0321">
    <property type="taxonomic scope" value="Bacteria"/>
</dbReference>
<dbReference type="HOGENOM" id="CLU_035168_3_1_6"/>
<dbReference type="OrthoDB" id="9787061at2"/>
<dbReference type="UniPathway" id="UPA00538">
    <property type="reaction ID" value="UER00592"/>
</dbReference>
<dbReference type="Proteomes" id="UP000009175">
    <property type="component" value="Chromosome"/>
</dbReference>
<dbReference type="GO" id="GO:0005737">
    <property type="term" value="C:cytoplasm"/>
    <property type="evidence" value="ECO:0007669"/>
    <property type="project" value="UniProtKB-SubCell"/>
</dbReference>
<dbReference type="GO" id="GO:0033819">
    <property type="term" value="F:lipoyl(octanoyl) transferase activity"/>
    <property type="evidence" value="ECO:0007669"/>
    <property type="project" value="UniProtKB-EC"/>
</dbReference>
<dbReference type="GO" id="GO:0036211">
    <property type="term" value="P:protein modification process"/>
    <property type="evidence" value="ECO:0007669"/>
    <property type="project" value="InterPro"/>
</dbReference>
<dbReference type="CDD" id="cd16444">
    <property type="entry name" value="LipB"/>
    <property type="match status" value="1"/>
</dbReference>
<dbReference type="FunFam" id="3.30.930.10:FF:000020">
    <property type="entry name" value="Octanoyltransferase"/>
    <property type="match status" value="1"/>
</dbReference>
<dbReference type="Gene3D" id="3.30.930.10">
    <property type="entry name" value="Bira Bifunctional Protein, Domain 2"/>
    <property type="match status" value="1"/>
</dbReference>
<dbReference type="HAMAP" id="MF_00013">
    <property type="entry name" value="LipB"/>
    <property type="match status" value="1"/>
</dbReference>
<dbReference type="InterPro" id="IPR045864">
    <property type="entry name" value="aa-tRNA-synth_II/BPL/LPL"/>
</dbReference>
<dbReference type="InterPro" id="IPR004143">
    <property type="entry name" value="BPL_LPL_catalytic"/>
</dbReference>
<dbReference type="InterPro" id="IPR000544">
    <property type="entry name" value="Octanoyltransferase"/>
</dbReference>
<dbReference type="InterPro" id="IPR020605">
    <property type="entry name" value="Octanoyltransferase_CS"/>
</dbReference>
<dbReference type="NCBIfam" id="TIGR00214">
    <property type="entry name" value="lipB"/>
    <property type="match status" value="1"/>
</dbReference>
<dbReference type="NCBIfam" id="NF010922">
    <property type="entry name" value="PRK14342.1"/>
    <property type="match status" value="1"/>
</dbReference>
<dbReference type="PANTHER" id="PTHR10993:SF7">
    <property type="entry name" value="LIPOYLTRANSFERASE 2, MITOCHONDRIAL-RELATED"/>
    <property type="match status" value="1"/>
</dbReference>
<dbReference type="PANTHER" id="PTHR10993">
    <property type="entry name" value="OCTANOYLTRANSFERASE"/>
    <property type="match status" value="1"/>
</dbReference>
<dbReference type="Pfam" id="PF21948">
    <property type="entry name" value="LplA-B_cat"/>
    <property type="match status" value="1"/>
</dbReference>
<dbReference type="PIRSF" id="PIRSF016262">
    <property type="entry name" value="LPLase"/>
    <property type="match status" value="1"/>
</dbReference>
<dbReference type="SUPFAM" id="SSF55681">
    <property type="entry name" value="Class II aaRS and biotin synthetases"/>
    <property type="match status" value="1"/>
</dbReference>
<dbReference type="PROSITE" id="PS51733">
    <property type="entry name" value="BPL_LPL_CATALYTIC"/>
    <property type="match status" value="1"/>
</dbReference>
<dbReference type="PROSITE" id="PS01313">
    <property type="entry name" value="LIPB"/>
    <property type="match status" value="1"/>
</dbReference>
<reference key="1">
    <citation type="submission" date="2006-12" db="EMBL/GenBank/DDBJ databases">
        <title>Complete sequence of Shewanella amazonensis SB2B.</title>
        <authorList>
            <consortium name="US DOE Joint Genome Institute"/>
            <person name="Copeland A."/>
            <person name="Lucas S."/>
            <person name="Lapidus A."/>
            <person name="Barry K."/>
            <person name="Detter J.C."/>
            <person name="Glavina del Rio T."/>
            <person name="Hammon N."/>
            <person name="Israni S."/>
            <person name="Dalin E."/>
            <person name="Tice H."/>
            <person name="Pitluck S."/>
            <person name="Munk A.C."/>
            <person name="Brettin T."/>
            <person name="Bruce D."/>
            <person name="Han C."/>
            <person name="Tapia R."/>
            <person name="Gilna P."/>
            <person name="Schmutz J."/>
            <person name="Larimer F."/>
            <person name="Land M."/>
            <person name="Hauser L."/>
            <person name="Kyrpides N."/>
            <person name="Mikhailova N."/>
            <person name="Fredrickson J."/>
            <person name="Richardson P."/>
        </authorList>
    </citation>
    <scope>NUCLEOTIDE SEQUENCE [LARGE SCALE GENOMIC DNA]</scope>
    <source>
        <strain>ATCC BAA-1098 / SB2B</strain>
    </source>
</reference>
<proteinExistence type="inferred from homology"/>
<comment type="function">
    <text evidence="1">Catalyzes the transfer of endogenously produced octanoic acid from octanoyl-acyl-carrier-protein onto the lipoyl domains of lipoate-dependent enzymes. Lipoyl-ACP can also act as a substrate although octanoyl-ACP is likely to be the physiological substrate.</text>
</comment>
<comment type="catalytic activity">
    <reaction evidence="1">
        <text>octanoyl-[ACP] + L-lysyl-[protein] = N(6)-octanoyl-L-lysyl-[protein] + holo-[ACP] + H(+)</text>
        <dbReference type="Rhea" id="RHEA:17665"/>
        <dbReference type="Rhea" id="RHEA-COMP:9636"/>
        <dbReference type="Rhea" id="RHEA-COMP:9685"/>
        <dbReference type="Rhea" id="RHEA-COMP:9752"/>
        <dbReference type="Rhea" id="RHEA-COMP:9928"/>
        <dbReference type="ChEBI" id="CHEBI:15378"/>
        <dbReference type="ChEBI" id="CHEBI:29969"/>
        <dbReference type="ChEBI" id="CHEBI:64479"/>
        <dbReference type="ChEBI" id="CHEBI:78463"/>
        <dbReference type="ChEBI" id="CHEBI:78809"/>
        <dbReference type="EC" id="2.3.1.181"/>
    </reaction>
</comment>
<comment type="pathway">
    <text evidence="1">Protein modification; protein lipoylation via endogenous pathway; protein N(6)-(lipoyl)lysine from octanoyl-[acyl-carrier-protein]: step 1/2.</text>
</comment>
<comment type="subcellular location">
    <subcellularLocation>
        <location evidence="1">Cytoplasm</location>
    </subcellularLocation>
</comment>
<comment type="miscellaneous">
    <text evidence="1">In the reaction, the free carboxyl group of octanoic acid is attached via an amide linkage to the epsilon-amino group of a specific lysine residue of lipoyl domains of lipoate-dependent enzymes.</text>
</comment>
<comment type="similarity">
    <text evidence="1">Belongs to the LipB family.</text>
</comment>
<keyword id="KW-0012">Acyltransferase</keyword>
<keyword id="KW-0963">Cytoplasm</keyword>
<keyword id="KW-1185">Reference proteome</keyword>
<keyword id="KW-0808">Transferase</keyword>
<name>LIPB_SHEAM</name>
<protein>
    <recommendedName>
        <fullName evidence="1">Octanoyltransferase</fullName>
        <ecNumber evidence="1">2.3.1.181</ecNumber>
    </recommendedName>
    <alternativeName>
        <fullName evidence="1">Lipoate-protein ligase B</fullName>
    </alternativeName>
    <alternativeName>
        <fullName evidence="1">Lipoyl/octanoyl transferase</fullName>
    </alternativeName>
    <alternativeName>
        <fullName evidence="1">Octanoyl-[acyl-carrier-protein]-protein N-octanoyltransferase</fullName>
    </alternativeName>
</protein>
<feature type="chain" id="PRO_1000001128" description="Octanoyltransferase">
    <location>
        <begin position="1"/>
        <end position="216"/>
    </location>
</feature>
<feature type="domain" description="BPL/LPL catalytic" evidence="2">
    <location>
        <begin position="32"/>
        <end position="207"/>
    </location>
</feature>
<feature type="active site" description="Acyl-thioester intermediate" evidence="1">
    <location>
        <position position="169"/>
    </location>
</feature>
<feature type="binding site" evidence="1">
    <location>
        <begin position="71"/>
        <end position="78"/>
    </location>
    <ligand>
        <name>substrate</name>
    </ligand>
</feature>
<feature type="binding site" evidence="1">
    <location>
        <begin position="138"/>
        <end position="140"/>
    </location>
    <ligand>
        <name>substrate</name>
    </ligand>
</feature>
<feature type="binding site" evidence="1">
    <location>
        <begin position="151"/>
        <end position="153"/>
    </location>
    <ligand>
        <name>substrate</name>
    </ligand>
</feature>
<feature type="site" description="Lowers pKa of active site Cys" evidence="1">
    <location>
        <position position="135"/>
    </location>
</feature>
<evidence type="ECO:0000255" key="1">
    <source>
        <dbReference type="HAMAP-Rule" id="MF_00013"/>
    </source>
</evidence>
<evidence type="ECO:0000255" key="2">
    <source>
        <dbReference type="PROSITE-ProRule" id="PRU01067"/>
    </source>
</evidence>